<accession>Q8ILQ7</accession>
<accession>A0A144A1J6</accession>
<accession>Q8MU52</accession>
<accession>Q95V54</accession>
<proteinExistence type="evidence at protein level"/>
<reference key="1">
    <citation type="journal article" date="2002" name="Biol. Chem.">
        <title>Glutathione S-transferase of the malarial parasite Plasmodium falciparum: characterization of a potential drug target.</title>
        <authorList>
            <person name="Harwaldt P."/>
            <person name="Rahlfs S."/>
            <person name="Becker K."/>
        </authorList>
    </citation>
    <scope>NUCLEOTIDE SEQUENCE [MRNA]</scope>
    <scope>FUNCTION</scope>
    <scope>CATALYTIC ACTIVITY</scope>
    <scope>ACTIVITY REGULATION</scope>
    <scope>BIOPHYSICOCHEMICAL PROPERTIES</scope>
    <scope>SUBUNIT</scope>
</reference>
<reference key="2">
    <citation type="journal article" date="2002" name="Mol. Biochem. Parasitol.">
        <title>The glutathione S-transferase from Plasmodium falciparum.</title>
        <authorList>
            <person name="Liebau E."/>
            <person name="Bergmann B."/>
            <person name="Campbell A.M."/>
            <person name="Teesdale-Spittle P."/>
            <person name="Brophy P.M."/>
            <person name="Lueersen K."/>
            <person name="Walter R.D."/>
        </authorList>
    </citation>
    <scope>NUCLEOTIDE SEQUENCE [MRNA]</scope>
    <scope>FUNCTION</scope>
    <scope>CATALYTIC ACTIVITY</scope>
    <scope>ACTIVITY REGULATION</scope>
    <scope>BIOPHYSICOCHEMICAL PROPERTIES</scope>
    <scope>SUBUNIT</scope>
</reference>
<reference key="3">
    <citation type="journal article" date="2002" name="Nature">
        <title>Genome sequence of the human malaria parasite Plasmodium falciparum.</title>
        <authorList>
            <person name="Gardner M.J."/>
            <person name="Hall N."/>
            <person name="Fung E."/>
            <person name="White O."/>
            <person name="Berriman M."/>
            <person name="Hyman R.W."/>
            <person name="Carlton J.M."/>
            <person name="Pain A."/>
            <person name="Nelson K.E."/>
            <person name="Bowman S."/>
            <person name="Paulsen I.T."/>
            <person name="James K.D."/>
            <person name="Eisen J.A."/>
            <person name="Rutherford K.M."/>
            <person name="Salzberg S.L."/>
            <person name="Craig A."/>
            <person name="Kyes S."/>
            <person name="Chan M.-S."/>
            <person name="Nene V."/>
            <person name="Shallom S.J."/>
            <person name="Suh B."/>
            <person name="Peterson J."/>
            <person name="Angiuoli S."/>
            <person name="Pertea M."/>
            <person name="Allen J."/>
            <person name="Selengut J."/>
            <person name="Haft D."/>
            <person name="Mather M.W."/>
            <person name="Vaidya A.B."/>
            <person name="Martin D.M.A."/>
            <person name="Fairlamb A.H."/>
            <person name="Fraunholz M.J."/>
            <person name="Roos D.S."/>
            <person name="Ralph S.A."/>
            <person name="McFadden G.I."/>
            <person name="Cummings L.M."/>
            <person name="Subramanian G.M."/>
            <person name="Mungall C."/>
            <person name="Venter J.C."/>
            <person name="Carucci D.J."/>
            <person name="Hoffman S.L."/>
            <person name="Newbold C."/>
            <person name="Davis R.W."/>
            <person name="Fraser C.M."/>
            <person name="Barrell B.G."/>
        </authorList>
    </citation>
    <scope>NUCLEOTIDE SEQUENCE [LARGE SCALE GENOMIC DNA]</scope>
    <source>
        <strain>3D7</strain>
    </source>
</reference>
<reference key="4">
    <citation type="journal article" date="2005" name="J. Biol. Chem.">
        <title>Cooperativity and pseudo-cooperativity in the glutathione S-transferase from Plasmodium falciparum.</title>
        <authorList>
            <person name="Liebau E."/>
            <person name="De Maria F."/>
            <person name="Burmeister C."/>
            <person name="Perbandt M."/>
            <person name="Turella P."/>
            <person name="Antonini G."/>
            <person name="Federici G."/>
            <person name="Giansanti F."/>
            <person name="Stella L."/>
            <person name="Lo Bello M."/>
            <person name="Caccuri A.M."/>
            <person name="Ricci G."/>
        </authorList>
    </citation>
    <scope>CATALYTIC ACTIVITY</scope>
    <scope>ACTIVITY REGULATION</scope>
    <scope>BIOPHYSICOCHEMICAL PROPERTIES</scope>
</reference>
<reference key="5">
    <citation type="journal article" date="2003" name="Proc. Natl. Acad. Sci. U.S.A.">
        <title>X-ray structure of glutathione S-transferase from the malarial parasite Plasmodium falciparum.</title>
        <authorList>
            <person name="Fritz-Wolf K."/>
            <person name="Becker A."/>
            <person name="Rahlfs S."/>
            <person name="Harwaldt P."/>
            <person name="Schirmer R.H."/>
            <person name="Kabsch W."/>
            <person name="Becker K."/>
        </authorList>
    </citation>
    <scope>X-RAY CRYSTALLOGRAPHY (1.9 ANGSTROMS)</scope>
    <scope>CATALYTIC ACTIVITY</scope>
</reference>
<reference key="6">
    <citation type="journal article" date="2004" name="J. Biol. Chem.">
        <title>Native and inhibited structure of a Mu class-related glutathione S-transferase from Plasmodium falciparum.</title>
        <authorList>
            <person name="Perbandt M."/>
            <person name="Burmeister C."/>
            <person name="Walter R.D."/>
            <person name="Betzel C."/>
            <person name="Liebau E."/>
        </authorList>
    </citation>
    <scope>X-RAY CRYSTALLOGRAPHY (2.2 ANGSTROMS) IN COMPLEX WITH S-HEXYL GLUTATHIONE</scope>
</reference>
<reference key="7">
    <citation type="journal article" date="2006" name="Protein Sci.">
        <title>Plasmodium falciparum glutathione S-transferase -- structural and mechanistic studies on ligand binding and enzyme inhibition.</title>
        <authorList>
            <person name="Hiller N."/>
            <person name="Fritz-Wolf K."/>
            <person name="Deponte M."/>
            <person name="Wende W."/>
            <person name="Zimmermann H."/>
            <person name="Becker K."/>
        </authorList>
    </citation>
    <scope>X-RAY CRYSTALLOGRAPHY (2.4 ANGSTROMS) IN COMPLEX WITH S-HEXYL GLUTATHIONE</scope>
    <scope>FUNCTION</scope>
    <scope>BIOPHYSICOCHEMICAL PROPERTIES</scope>
    <scope>SUBUNIT</scope>
    <scope>MUTAGENESIS OF TYR-9; LYS-15; GLN-71; CYS-101 AND TYR-211</scope>
</reference>
<comment type="function">
    <text evidence="2 3 6">Conjugation of reduced glutathione to a wide number of exogenous and endogenous hydrophobic electrophiles. May also function as a storage protein or ligandin for parasitotoxic ferriprotoporphyrin IX (hemin).</text>
</comment>
<comment type="catalytic activity">
    <reaction evidence="2 3 4 5">
        <text>RX + glutathione = an S-substituted glutathione + a halide anion + H(+)</text>
        <dbReference type="Rhea" id="RHEA:16437"/>
        <dbReference type="ChEBI" id="CHEBI:15378"/>
        <dbReference type="ChEBI" id="CHEBI:16042"/>
        <dbReference type="ChEBI" id="CHEBI:17792"/>
        <dbReference type="ChEBI" id="CHEBI:57925"/>
        <dbReference type="ChEBI" id="CHEBI:90779"/>
        <dbReference type="EC" id="2.5.1.18"/>
    </reaction>
</comment>
<comment type="activity regulation">
    <text evidence="2 3 5">Inhibited by chloroquine, cibacron blue, ferriprotoporphyrin IX (hemin) and S-hexylglutathione.</text>
</comment>
<comment type="biophysicochemical properties">
    <kinetics>
        <KM evidence="2 3 5 6">0.156 mM for bromosulphophthalein</KM>
        <KM evidence="2 3 5 6">10 mM for 1-chloro-2,4-dinitrobenzene</KM>
        <KM evidence="2 3 5 6">2.5 mM for 7-chloro-4-nitrobenzo-2-oxa-1,3-diazole</KM>
        <KM evidence="2 3 5 6">0.96 mM for ethacrynic acid</KM>
        <KM evidence="2 3 5 6">0.164 mM for reduced glutathione</KM>
    </kinetics>
    <phDependence>
        <text evidence="2 3 5 6">Optimum pH is 8.1.</text>
    </phDependence>
</comment>
<comment type="subunit">
    <text evidence="2 3 6">Homodimer. In the absence of ligands two homodimers may interact to form a tetramer.</text>
</comment>
<comment type="similarity">
    <text evidence="8">Belongs to the GST superfamily.</text>
</comment>
<organism>
    <name type="scientific">Plasmodium falciparum (isolate 3D7)</name>
    <dbReference type="NCBI Taxonomy" id="36329"/>
    <lineage>
        <taxon>Eukaryota</taxon>
        <taxon>Sar</taxon>
        <taxon>Alveolata</taxon>
        <taxon>Apicomplexa</taxon>
        <taxon>Aconoidasida</taxon>
        <taxon>Haemosporida</taxon>
        <taxon>Plasmodiidae</taxon>
        <taxon>Plasmodium</taxon>
        <taxon>Plasmodium (Laverania)</taxon>
    </lineage>
</organism>
<feature type="chain" id="PRO_0000259967" description="Glutathione S-transferase">
    <location>
        <begin position="1"/>
        <end position="211"/>
    </location>
</feature>
<feature type="domain" description="GST N-terminal" evidence="1">
    <location>
        <begin position="3"/>
        <end position="87"/>
    </location>
</feature>
<feature type="domain" description="GST C-terminal" evidence="1">
    <location>
        <begin position="89"/>
        <end position="211"/>
    </location>
</feature>
<feature type="binding site" evidence="9">
    <location>
        <begin position="58"/>
        <end position="59"/>
    </location>
    <ligand>
        <name>glutathione</name>
        <dbReference type="ChEBI" id="CHEBI:57925"/>
    </ligand>
</feature>
<feature type="binding site" evidence="9">
    <location>
        <begin position="71"/>
        <end position="72"/>
    </location>
    <ligand>
        <name>glutathione</name>
        <dbReference type="ChEBI" id="CHEBI:57925"/>
    </ligand>
</feature>
<feature type="binding site" evidence="10">
    <location>
        <position position="105"/>
    </location>
    <ligand>
        <name>glutathione</name>
        <dbReference type="ChEBI" id="CHEBI:57925"/>
    </ligand>
</feature>
<feature type="binding site" evidence="9">
    <location>
        <position position="117"/>
    </location>
    <ligand>
        <name>glutathione</name>
        <dbReference type="ChEBI" id="CHEBI:57925"/>
    </ligand>
</feature>
<feature type="binding site" evidence="9">
    <location>
        <position position="121"/>
    </location>
    <ligand>
        <name>glutathione</name>
        <dbReference type="ChEBI" id="CHEBI:57925"/>
    </ligand>
</feature>
<feature type="mutagenesis site" description="Greater than 10-fold decrease in activity." evidence="6">
    <original>Y</original>
    <variation>F</variation>
    <location>
        <position position="9"/>
    </location>
</feature>
<feature type="mutagenesis site" description="10-fold decrease in substrate affinity and 20-fold decrease in activity." evidence="6">
    <original>K</original>
    <variation>E</variation>
    <location>
        <position position="15"/>
    </location>
</feature>
<feature type="mutagenesis site" description="3-fold decrease in substrate affinity and 2-fold decrease in activity." evidence="6">
    <original>Q</original>
    <variation>E</variation>
    <location>
        <position position="71"/>
    </location>
</feature>
<feature type="mutagenesis site" description="2-fold decrease in substrate affinity." evidence="6">
    <original>C</original>
    <variation>A</variation>
    <location>
        <position position="101"/>
    </location>
</feature>
<feature type="mutagenesis site" description="2-fold increase in activity." evidence="6">
    <original>Y</original>
    <variation>F</variation>
    <location>
        <position position="211"/>
    </location>
</feature>
<feature type="sequence conflict" description="In Ref. 2; AAL25087." evidence="8" ref="2">
    <original>M</original>
    <variation>MKL</variation>
    <location>
        <position position="1"/>
    </location>
</feature>
<feature type="strand" evidence="13">
    <location>
        <begin position="5"/>
        <end position="12"/>
    </location>
</feature>
<feature type="turn" evidence="13">
    <location>
        <begin position="14"/>
        <end position="16"/>
    </location>
</feature>
<feature type="helix" evidence="13">
    <location>
        <begin position="17"/>
        <end position="26"/>
    </location>
</feature>
<feature type="strand" evidence="13">
    <location>
        <begin position="31"/>
        <end position="35"/>
    </location>
</feature>
<feature type="strand" evidence="13">
    <location>
        <begin position="37"/>
        <end position="39"/>
    </location>
</feature>
<feature type="helix" evidence="13">
    <location>
        <begin position="41"/>
        <end position="51"/>
    </location>
</feature>
<feature type="strand" evidence="13">
    <location>
        <begin position="55"/>
        <end position="57"/>
    </location>
</feature>
<feature type="strand" evidence="13">
    <location>
        <begin position="61"/>
        <end position="64"/>
    </location>
</feature>
<feature type="strand" evidence="13">
    <location>
        <begin position="67"/>
        <end position="70"/>
    </location>
</feature>
<feature type="helix" evidence="13">
    <location>
        <begin position="72"/>
        <end position="82"/>
    </location>
</feature>
<feature type="helix" evidence="13">
    <location>
        <begin position="90"/>
        <end position="111"/>
    </location>
</feature>
<feature type="turn" evidence="13">
    <location>
        <begin position="115"/>
        <end position="118"/>
    </location>
</feature>
<feature type="helix" evidence="13">
    <location>
        <begin position="120"/>
        <end position="126"/>
    </location>
</feature>
<feature type="helix" evidence="13">
    <location>
        <begin position="128"/>
        <end position="141"/>
    </location>
</feature>
<feature type="turn" evidence="12">
    <location>
        <begin position="142"/>
        <end position="144"/>
    </location>
</feature>
<feature type="helix" evidence="13">
    <location>
        <begin position="160"/>
        <end position="175"/>
    </location>
</feature>
<feature type="turn" evidence="11">
    <location>
        <begin position="179"/>
        <end position="182"/>
    </location>
</feature>
<feature type="helix" evidence="13">
    <location>
        <begin position="184"/>
        <end position="194"/>
    </location>
</feature>
<feature type="helix" evidence="13">
    <location>
        <begin position="197"/>
        <end position="205"/>
    </location>
</feature>
<gene>
    <name evidence="7" type="primary">GST</name>
    <name type="ORF">PF14_0187</name>
    <name type="ORF">PF3D7_1419300</name>
</gene>
<name>GST_PLAF7</name>
<protein>
    <recommendedName>
        <fullName evidence="7">Glutathione S-transferase</fullName>
        <shortName evidence="7">PfGST</shortName>
        <ecNumber evidence="2 3 4 5">2.5.1.18</ecNumber>
    </recommendedName>
</protein>
<evidence type="ECO:0000255" key="1"/>
<evidence type="ECO:0000269" key="2">
    <source>
    </source>
</evidence>
<evidence type="ECO:0000269" key="3">
    <source>
    </source>
</evidence>
<evidence type="ECO:0000269" key="4">
    <source>
    </source>
</evidence>
<evidence type="ECO:0000269" key="5">
    <source>
    </source>
</evidence>
<evidence type="ECO:0000269" key="6">
    <source>
    </source>
</evidence>
<evidence type="ECO:0000303" key="7">
    <source>
    </source>
</evidence>
<evidence type="ECO:0000305" key="8"/>
<evidence type="ECO:0000305" key="9">
    <source>
    </source>
</evidence>
<evidence type="ECO:0007744" key="10">
    <source>
        <dbReference type="PDB" id="3FR9"/>
    </source>
</evidence>
<evidence type="ECO:0007829" key="11">
    <source>
        <dbReference type="PDB" id="1OKT"/>
    </source>
</evidence>
<evidence type="ECO:0007829" key="12">
    <source>
        <dbReference type="PDB" id="1Q4J"/>
    </source>
</evidence>
<evidence type="ECO:0007829" key="13">
    <source>
        <dbReference type="PDB" id="4ZXG"/>
    </source>
</evidence>
<sequence>MGDNIVLYYFDARGKAELIRLIFAYLGIEYTDKRFGVNGDAFVEFKNFKKEKDTPFEQVPILQIGDLILAQSQAIVRYLSKKYNICGESELNEFYADMIFCGVQDIHYKFNNTNLFKQNETTFLNEDLPKWSGYFEKLLKKNHTNNNNDKYYFVGNNLTYADLAVFNLYDDIETKYPSSLKNFPLLKAHNEFISNLPNIKNYITNRKESVY</sequence>
<keyword id="KW-0002">3D-structure</keyword>
<keyword id="KW-1185">Reference proteome</keyword>
<keyword id="KW-0808">Transferase</keyword>
<dbReference type="EC" id="2.5.1.18" evidence="2 3 4 5"/>
<dbReference type="EMBL" id="AY014840">
    <property type="protein sequence ID" value="AAK00582.1"/>
    <property type="molecule type" value="mRNA"/>
</dbReference>
<dbReference type="EMBL" id="AF426836">
    <property type="protein sequence ID" value="AAL25087.1"/>
    <property type="molecule type" value="mRNA"/>
</dbReference>
<dbReference type="EMBL" id="LN999946">
    <property type="protein sequence ID" value="CZT99899.1"/>
    <property type="molecule type" value="Genomic_DNA"/>
</dbReference>
<dbReference type="RefSeq" id="XP_001348360.1">
    <property type="nucleotide sequence ID" value="XM_001348324.1"/>
</dbReference>
<dbReference type="PDB" id="1OKT">
    <property type="method" value="X-ray"/>
    <property type="resolution" value="1.90 A"/>
    <property type="chains" value="A/B=1-211"/>
</dbReference>
<dbReference type="PDB" id="1PA3">
    <property type="method" value="X-ray"/>
    <property type="resolution" value="2.70 A"/>
    <property type="chains" value="A/B=1-211"/>
</dbReference>
<dbReference type="PDB" id="1Q4J">
    <property type="method" value="X-ray"/>
    <property type="resolution" value="2.20 A"/>
    <property type="chains" value="A/B=1-211"/>
</dbReference>
<dbReference type="PDB" id="2AAW">
    <property type="method" value="X-ray"/>
    <property type="resolution" value="2.40 A"/>
    <property type="chains" value="A/C=1-211"/>
</dbReference>
<dbReference type="PDB" id="3FR3">
    <property type="method" value="X-ray"/>
    <property type="resolution" value="1.90 A"/>
    <property type="chains" value="A/B=1-211"/>
</dbReference>
<dbReference type="PDB" id="3FR6">
    <property type="method" value="X-ray"/>
    <property type="resolution" value="2.60 A"/>
    <property type="chains" value="A/B=1-211"/>
</dbReference>
<dbReference type="PDB" id="3FR9">
    <property type="method" value="X-ray"/>
    <property type="resolution" value="2.40 A"/>
    <property type="chains" value="A/B=1-211"/>
</dbReference>
<dbReference type="PDB" id="3FRC">
    <property type="method" value="X-ray"/>
    <property type="resolution" value="2.00 A"/>
    <property type="chains" value="A/B=1-211"/>
</dbReference>
<dbReference type="PDB" id="4ZXG">
    <property type="method" value="X-ray"/>
    <property type="resolution" value="1.70 A"/>
    <property type="chains" value="A/B=3-207"/>
</dbReference>
<dbReference type="PDBsum" id="1OKT"/>
<dbReference type="PDBsum" id="1PA3"/>
<dbReference type="PDBsum" id="1Q4J"/>
<dbReference type="PDBsum" id="2AAW"/>
<dbReference type="PDBsum" id="3FR3"/>
<dbReference type="PDBsum" id="3FR6"/>
<dbReference type="PDBsum" id="3FR9"/>
<dbReference type="PDBsum" id="3FRC"/>
<dbReference type="PDBsum" id="4ZXG"/>
<dbReference type="SMR" id="Q8ILQ7"/>
<dbReference type="FunCoup" id="Q8ILQ7">
    <property type="interactions" value="13"/>
</dbReference>
<dbReference type="STRING" id="36329.Q8ILQ7"/>
<dbReference type="BindingDB" id="Q8ILQ7"/>
<dbReference type="ChEMBL" id="CHEMBL1697656"/>
<dbReference type="DrugBank" id="DB00608">
    <property type="generic name" value="Chloroquine"/>
</dbReference>
<dbReference type="DrugBank" id="DB01942">
    <property type="generic name" value="Formic acid"/>
</dbReference>
<dbReference type="DrugBank" id="DB04132">
    <property type="generic name" value="S-Hexylglutathione"/>
</dbReference>
<dbReference type="PaxDb" id="5833-PF14_0187"/>
<dbReference type="EnsemblProtists" id="CZT99899">
    <property type="protein sequence ID" value="CZT99899"/>
    <property type="gene ID" value="PF3D7_1419300"/>
</dbReference>
<dbReference type="GeneID" id="811768"/>
<dbReference type="KEGG" id="pfa:PF3D7_1419300"/>
<dbReference type="VEuPathDB" id="PlasmoDB:PF3D7_1419300"/>
<dbReference type="VEuPathDB" id="PlasmoDB:Pf7G8-2_000494300"/>
<dbReference type="VEuPathDB" id="PlasmoDB:Pf7G8_140024800"/>
<dbReference type="VEuPathDB" id="PlasmoDB:PfCD01_140025000"/>
<dbReference type="VEuPathDB" id="PlasmoDB:PfDd2_140024100"/>
<dbReference type="VEuPathDB" id="PlasmoDB:PfGA01_140025100"/>
<dbReference type="VEuPathDB" id="PlasmoDB:PfGB4_140025700"/>
<dbReference type="VEuPathDB" id="PlasmoDB:PfGN01_140024800"/>
<dbReference type="VEuPathDB" id="PlasmoDB:PfHB3_140025300"/>
<dbReference type="VEuPathDB" id="PlasmoDB:PfIT_140026000"/>
<dbReference type="VEuPathDB" id="PlasmoDB:PfKE01_140024600"/>
<dbReference type="VEuPathDB" id="PlasmoDB:PfKH01_140025000"/>
<dbReference type="VEuPathDB" id="PlasmoDB:PfKH02_140025300"/>
<dbReference type="VEuPathDB" id="PlasmoDB:PfML01_140024800"/>
<dbReference type="VEuPathDB" id="PlasmoDB:PfNF135_140024700"/>
<dbReference type="VEuPathDB" id="PlasmoDB:PfNF166_140023400"/>
<dbReference type="VEuPathDB" id="PlasmoDB:PfNF54_140024300"/>
<dbReference type="VEuPathDB" id="PlasmoDB:PfSD01_140022900"/>
<dbReference type="VEuPathDB" id="PlasmoDB:PfSN01_140026700"/>
<dbReference type="VEuPathDB" id="PlasmoDB:PfTG01_140024900"/>
<dbReference type="HOGENOM" id="CLU_039475_1_0_1"/>
<dbReference type="OMA" id="LDLMMMI"/>
<dbReference type="OrthoDB" id="422574at2759"/>
<dbReference type="PhylomeDB" id="Q8ILQ7"/>
<dbReference type="BRENDA" id="2.5.1.18">
    <property type="organism ID" value="4889"/>
</dbReference>
<dbReference type="Reactome" id="R-PFA-156590">
    <property type="pathway name" value="Glutathione conjugation"/>
</dbReference>
<dbReference type="Reactome" id="R-PFA-189483">
    <property type="pathway name" value="Heme degradation"/>
</dbReference>
<dbReference type="Reactome" id="R-PFA-2162123">
    <property type="pathway name" value="Synthesis of Prostaglandins (PG) and Thromboxanes (TX)"/>
</dbReference>
<dbReference type="Reactome" id="R-PFA-3299685">
    <property type="pathway name" value="Detoxification of Reactive Oxygen Species"/>
</dbReference>
<dbReference type="Reactome" id="R-PFA-6798695">
    <property type="pathway name" value="Neutrophil degranulation"/>
</dbReference>
<dbReference type="Reactome" id="R-PFA-9748787">
    <property type="pathway name" value="Azathioprine ADME"/>
</dbReference>
<dbReference type="Reactome" id="R-PFA-9753281">
    <property type="pathway name" value="Paracetamol ADME"/>
</dbReference>
<dbReference type="EvolutionaryTrace" id="Q8ILQ7"/>
<dbReference type="Proteomes" id="UP000001450">
    <property type="component" value="Chromosome 14"/>
</dbReference>
<dbReference type="GO" id="GO:0004364">
    <property type="term" value="F:glutathione transferase activity"/>
    <property type="evidence" value="ECO:0000314"/>
    <property type="project" value="GeneDB"/>
</dbReference>
<dbReference type="GO" id="GO:0006749">
    <property type="term" value="P:glutathione metabolic process"/>
    <property type="evidence" value="ECO:0000318"/>
    <property type="project" value="GO_Central"/>
</dbReference>
<dbReference type="CDD" id="cd03192">
    <property type="entry name" value="GST_C_Sigma_like"/>
    <property type="match status" value="1"/>
</dbReference>
<dbReference type="CDD" id="cd03039">
    <property type="entry name" value="GST_N_Sigma_like"/>
    <property type="match status" value="1"/>
</dbReference>
<dbReference type="FunFam" id="1.20.1050.10:FF:000048">
    <property type="entry name" value="Glutathione S-transferase"/>
    <property type="match status" value="1"/>
</dbReference>
<dbReference type="Gene3D" id="1.20.1050.10">
    <property type="match status" value="1"/>
</dbReference>
<dbReference type="Gene3D" id="3.40.30.10">
    <property type="entry name" value="Glutaredoxin"/>
    <property type="match status" value="1"/>
</dbReference>
<dbReference type="InterPro" id="IPR010987">
    <property type="entry name" value="Glutathione-S-Trfase_C-like"/>
</dbReference>
<dbReference type="InterPro" id="IPR036282">
    <property type="entry name" value="Glutathione-S-Trfase_C_sf"/>
</dbReference>
<dbReference type="InterPro" id="IPR040079">
    <property type="entry name" value="Glutathione_S-Trfase"/>
</dbReference>
<dbReference type="InterPro" id="IPR004045">
    <property type="entry name" value="Glutathione_S-Trfase_N"/>
</dbReference>
<dbReference type="InterPro" id="IPR004046">
    <property type="entry name" value="GST_C"/>
</dbReference>
<dbReference type="InterPro" id="IPR050213">
    <property type="entry name" value="GST_superfamily"/>
</dbReference>
<dbReference type="InterPro" id="IPR036249">
    <property type="entry name" value="Thioredoxin-like_sf"/>
</dbReference>
<dbReference type="PANTHER" id="PTHR11571">
    <property type="entry name" value="GLUTATHIONE S-TRANSFERASE"/>
    <property type="match status" value="1"/>
</dbReference>
<dbReference type="PANTHER" id="PTHR11571:SF150">
    <property type="entry name" value="GLUTATHIONE S-TRANSFERASE"/>
    <property type="match status" value="1"/>
</dbReference>
<dbReference type="Pfam" id="PF14497">
    <property type="entry name" value="GST_C_3"/>
    <property type="match status" value="1"/>
</dbReference>
<dbReference type="Pfam" id="PF02798">
    <property type="entry name" value="GST_N"/>
    <property type="match status" value="1"/>
</dbReference>
<dbReference type="SFLD" id="SFLDG01205">
    <property type="entry name" value="AMPS.1"/>
    <property type="match status" value="1"/>
</dbReference>
<dbReference type="SFLD" id="SFLDS00019">
    <property type="entry name" value="Glutathione_Transferase_(cytos"/>
    <property type="match status" value="1"/>
</dbReference>
<dbReference type="SUPFAM" id="SSF47616">
    <property type="entry name" value="GST C-terminal domain-like"/>
    <property type="match status" value="1"/>
</dbReference>
<dbReference type="SUPFAM" id="SSF52833">
    <property type="entry name" value="Thioredoxin-like"/>
    <property type="match status" value="1"/>
</dbReference>
<dbReference type="PROSITE" id="PS50405">
    <property type="entry name" value="GST_CTER"/>
    <property type="match status" value="1"/>
</dbReference>
<dbReference type="PROSITE" id="PS50404">
    <property type="entry name" value="GST_NTER"/>
    <property type="match status" value="1"/>
</dbReference>